<dbReference type="EC" id="2.1.1.33" evidence="2"/>
<dbReference type="EMBL" id="CR628336">
    <property type="protein sequence ID" value="CAH11693.1"/>
    <property type="molecule type" value="Genomic_DNA"/>
</dbReference>
<dbReference type="RefSeq" id="WP_011213112.1">
    <property type="nucleotide sequence ID" value="NC_006368.1"/>
</dbReference>
<dbReference type="SMR" id="Q5X7R0"/>
<dbReference type="KEGG" id="lpp:lpp0545"/>
<dbReference type="LegioList" id="lpp0545"/>
<dbReference type="HOGENOM" id="CLU_050910_0_1_6"/>
<dbReference type="UniPathway" id="UPA00989"/>
<dbReference type="GO" id="GO:0043527">
    <property type="term" value="C:tRNA methyltransferase complex"/>
    <property type="evidence" value="ECO:0007669"/>
    <property type="project" value="TreeGrafter"/>
</dbReference>
<dbReference type="GO" id="GO:0008176">
    <property type="term" value="F:tRNA (guanine(46)-N7)-methyltransferase activity"/>
    <property type="evidence" value="ECO:0007669"/>
    <property type="project" value="UniProtKB-UniRule"/>
</dbReference>
<dbReference type="FunFam" id="3.40.50.150:FF:000035">
    <property type="entry name" value="tRNA (guanine-N(7)-)-methyltransferase"/>
    <property type="match status" value="1"/>
</dbReference>
<dbReference type="Gene3D" id="3.40.50.150">
    <property type="entry name" value="Vaccinia Virus protein VP39"/>
    <property type="match status" value="1"/>
</dbReference>
<dbReference type="HAMAP" id="MF_01057">
    <property type="entry name" value="tRNA_methyltr_TrmB"/>
    <property type="match status" value="1"/>
</dbReference>
<dbReference type="InterPro" id="IPR029063">
    <property type="entry name" value="SAM-dependent_MTases_sf"/>
</dbReference>
<dbReference type="InterPro" id="IPR003358">
    <property type="entry name" value="tRNA_(Gua-N-7)_MeTrfase_Trmb"/>
</dbReference>
<dbReference type="InterPro" id="IPR055361">
    <property type="entry name" value="tRNA_methyltr_TrmB_bact"/>
</dbReference>
<dbReference type="NCBIfam" id="TIGR00091">
    <property type="entry name" value="tRNA (guanosine(46)-N7)-methyltransferase TrmB"/>
    <property type="match status" value="1"/>
</dbReference>
<dbReference type="PANTHER" id="PTHR23417">
    <property type="entry name" value="3-DEOXY-D-MANNO-OCTULOSONIC-ACID TRANSFERASE/TRNA GUANINE-N 7 - -METHYLTRANSFERASE"/>
    <property type="match status" value="1"/>
</dbReference>
<dbReference type="PANTHER" id="PTHR23417:SF14">
    <property type="entry name" value="PENTACOTRIPEPTIDE-REPEAT REGION OF PRORP DOMAIN-CONTAINING PROTEIN"/>
    <property type="match status" value="1"/>
</dbReference>
<dbReference type="Pfam" id="PF02390">
    <property type="entry name" value="Methyltransf_4"/>
    <property type="match status" value="1"/>
</dbReference>
<dbReference type="SUPFAM" id="SSF53335">
    <property type="entry name" value="S-adenosyl-L-methionine-dependent methyltransferases"/>
    <property type="match status" value="1"/>
</dbReference>
<dbReference type="PROSITE" id="PS51625">
    <property type="entry name" value="SAM_MT_TRMB"/>
    <property type="match status" value="1"/>
</dbReference>
<sequence>MQRKIKSYVLRAGRISNRQQQGLDLWLEDYELKFDSPTPWNFAKEFGRHDADTIVEIGFGMGTSLFAMAMNNPQCNYLGIEVHKAGVGSLVADLHEHQISNVRVVVHDAVEVLQTKIPENSLAGVQIFFPDPWHKKRHHKRRLIQSEFIQMLVKKIRPSGFIHCATDWEDYAEHILNVLSSESALFNQQKEGGYSPRPDSRPLTKFEQRGERLGHGVWDLVFIKNKEVTNDKACNSY</sequence>
<keyword id="KW-0489">Methyltransferase</keyword>
<keyword id="KW-0949">S-adenosyl-L-methionine</keyword>
<keyword id="KW-0808">Transferase</keyword>
<keyword id="KW-0819">tRNA processing</keyword>
<feature type="chain" id="PRO_0000229171" description="tRNA (guanine-N(7)-)-methyltransferase">
    <location>
        <begin position="1"/>
        <end position="237"/>
    </location>
</feature>
<feature type="active site" evidence="1">
    <location>
        <position position="131"/>
    </location>
</feature>
<feature type="binding site" evidence="2">
    <location>
        <position position="56"/>
    </location>
    <ligand>
        <name>S-adenosyl-L-methionine</name>
        <dbReference type="ChEBI" id="CHEBI:59789"/>
    </ligand>
</feature>
<feature type="binding site" evidence="2">
    <location>
        <position position="81"/>
    </location>
    <ligand>
        <name>S-adenosyl-L-methionine</name>
        <dbReference type="ChEBI" id="CHEBI:59789"/>
    </ligand>
</feature>
<feature type="binding site" evidence="2">
    <location>
        <position position="108"/>
    </location>
    <ligand>
        <name>S-adenosyl-L-methionine</name>
        <dbReference type="ChEBI" id="CHEBI:59789"/>
    </ligand>
</feature>
<feature type="binding site" evidence="2">
    <location>
        <position position="131"/>
    </location>
    <ligand>
        <name>S-adenosyl-L-methionine</name>
        <dbReference type="ChEBI" id="CHEBI:59789"/>
    </ligand>
</feature>
<feature type="binding site" evidence="2">
    <location>
        <position position="135"/>
    </location>
    <ligand>
        <name>substrate</name>
    </ligand>
</feature>
<feature type="binding site" evidence="2">
    <location>
        <position position="167"/>
    </location>
    <ligand>
        <name>substrate</name>
    </ligand>
</feature>
<feature type="binding site" evidence="2">
    <location>
        <begin position="204"/>
        <end position="207"/>
    </location>
    <ligand>
        <name>substrate</name>
    </ligand>
</feature>
<organism>
    <name type="scientific">Legionella pneumophila (strain Paris)</name>
    <dbReference type="NCBI Taxonomy" id="297246"/>
    <lineage>
        <taxon>Bacteria</taxon>
        <taxon>Pseudomonadati</taxon>
        <taxon>Pseudomonadota</taxon>
        <taxon>Gammaproteobacteria</taxon>
        <taxon>Legionellales</taxon>
        <taxon>Legionellaceae</taxon>
        <taxon>Legionella</taxon>
    </lineage>
</organism>
<name>TRMB_LEGPA</name>
<proteinExistence type="inferred from homology"/>
<gene>
    <name evidence="2" type="primary">trmB</name>
    <name type="ordered locus">lpp0545</name>
</gene>
<reference key="1">
    <citation type="journal article" date="2004" name="Nat. Genet.">
        <title>Evidence in the Legionella pneumophila genome for exploitation of host cell functions and high genome plasticity.</title>
        <authorList>
            <person name="Cazalet C."/>
            <person name="Rusniok C."/>
            <person name="Brueggemann H."/>
            <person name="Zidane N."/>
            <person name="Magnier A."/>
            <person name="Ma L."/>
            <person name="Tichit M."/>
            <person name="Jarraud S."/>
            <person name="Bouchier C."/>
            <person name="Vandenesch F."/>
            <person name="Kunst F."/>
            <person name="Etienne J."/>
            <person name="Glaser P."/>
            <person name="Buchrieser C."/>
        </authorList>
    </citation>
    <scope>NUCLEOTIDE SEQUENCE [LARGE SCALE GENOMIC DNA]</scope>
    <source>
        <strain>Paris</strain>
    </source>
</reference>
<comment type="function">
    <text evidence="2">Catalyzes the formation of N(7)-methylguanine at position 46 (m7G46) in tRNA.</text>
</comment>
<comment type="catalytic activity">
    <reaction evidence="2">
        <text>guanosine(46) in tRNA + S-adenosyl-L-methionine = N(7)-methylguanosine(46) in tRNA + S-adenosyl-L-homocysteine</text>
        <dbReference type="Rhea" id="RHEA:42708"/>
        <dbReference type="Rhea" id="RHEA-COMP:10188"/>
        <dbReference type="Rhea" id="RHEA-COMP:10189"/>
        <dbReference type="ChEBI" id="CHEBI:57856"/>
        <dbReference type="ChEBI" id="CHEBI:59789"/>
        <dbReference type="ChEBI" id="CHEBI:74269"/>
        <dbReference type="ChEBI" id="CHEBI:74480"/>
        <dbReference type="EC" id="2.1.1.33"/>
    </reaction>
</comment>
<comment type="pathway">
    <text evidence="2">tRNA modification; N(7)-methylguanine-tRNA biosynthesis.</text>
</comment>
<comment type="similarity">
    <text evidence="2">Belongs to the class I-like SAM-binding methyltransferase superfamily. TrmB family.</text>
</comment>
<accession>Q5X7R0</accession>
<evidence type="ECO:0000250" key="1"/>
<evidence type="ECO:0000255" key="2">
    <source>
        <dbReference type="HAMAP-Rule" id="MF_01057"/>
    </source>
</evidence>
<protein>
    <recommendedName>
        <fullName evidence="2">tRNA (guanine-N(7)-)-methyltransferase</fullName>
        <ecNumber evidence="2">2.1.1.33</ecNumber>
    </recommendedName>
    <alternativeName>
        <fullName evidence="2">tRNA (guanine(46)-N(7))-methyltransferase</fullName>
    </alternativeName>
    <alternativeName>
        <fullName evidence="2">tRNA(m7G46)-methyltransferase</fullName>
    </alternativeName>
</protein>